<name>NLTP_BETVU</name>
<evidence type="ECO:0000255" key="1"/>
<evidence type="ECO:0000305" key="2"/>
<keyword id="KW-0929">Antimicrobial</keyword>
<keyword id="KW-1015">Disulfide bond</keyword>
<keyword id="KW-0295">Fungicide</keyword>
<keyword id="KW-0446">Lipid-binding</keyword>
<keyword id="KW-0611">Plant defense</keyword>
<keyword id="KW-0732">Signal</keyword>
<keyword id="KW-0813">Transport</keyword>
<feature type="signal peptide" evidence="1">
    <location>
        <begin position="1"/>
        <end position="26"/>
    </location>
</feature>
<feature type="chain" id="PRO_0000018367" description="Non-specific lipid-transfer protein">
    <location>
        <begin position="27"/>
        <end position="117"/>
    </location>
</feature>
<feature type="disulfide bond" evidence="1">
    <location>
        <begin position="29"/>
        <end position="76"/>
    </location>
</feature>
<feature type="disulfide bond" evidence="1">
    <location>
        <begin position="39"/>
        <end position="53"/>
    </location>
</feature>
<feature type="disulfide bond" evidence="1">
    <location>
        <begin position="54"/>
        <end position="99"/>
    </location>
</feature>
<feature type="disulfide bond" evidence="1">
    <location>
        <begin position="74"/>
        <end position="113"/>
    </location>
</feature>
<dbReference type="EMBL" id="X92748">
    <property type="protein sequence ID" value="CAA63407.1"/>
    <property type="molecule type" value="mRNA"/>
</dbReference>
<dbReference type="PIR" id="T14553">
    <property type="entry name" value="T14553"/>
</dbReference>
<dbReference type="SMR" id="Q43748"/>
<dbReference type="GO" id="GO:0008289">
    <property type="term" value="F:lipid binding"/>
    <property type="evidence" value="ECO:0007669"/>
    <property type="project" value="UniProtKB-KW"/>
</dbReference>
<dbReference type="GO" id="GO:0050832">
    <property type="term" value="P:defense response to fungus"/>
    <property type="evidence" value="ECO:0007669"/>
    <property type="project" value="UniProtKB-KW"/>
</dbReference>
<dbReference type="GO" id="GO:0031640">
    <property type="term" value="P:killing of cells of another organism"/>
    <property type="evidence" value="ECO:0007669"/>
    <property type="project" value="UniProtKB-KW"/>
</dbReference>
<dbReference type="GO" id="GO:0006869">
    <property type="term" value="P:lipid transport"/>
    <property type="evidence" value="ECO:0007669"/>
    <property type="project" value="InterPro"/>
</dbReference>
<dbReference type="CDD" id="cd01960">
    <property type="entry name" value="nsLTP1"/>
    <property type="match status" value="1"/>
</dbReference>
<dbReference type="Gene3D" id="1.10.110.10">
    <property type="entry name" value="Plant lipid-transfer and hydrophobic proteins"/>
    <property type="match status" value="1"/>
</dbReference>
<dbReference type="InterPro" id="IPR036312">
    <property type="entry name" value="Bifun_inhib/LTP/seed_sf"/>
</dbReference>
<dbReference type="InterPro" id="IPR016140">
    <property type="entry name" value="Bifunc_inhib/LTP/seed_store"/>
</dbReference>
<dbReference type="InterPro" id="IPR000528">
    <property type="entry name" value="Plant_nsLTP"/>
</dbReference>
<dbReference type="PANTHER" id="PTHR33076">
    <property type="entry name" value="NON-SPECIFIC LIPID-TRANSFER PROTEIN 2-RELATED"/>
    <property type="match status" value="1"/>
</dbReference>
<dbReference type="Pfam" id="PF00234">
    <property type="entry name" value="Tryp_alpha_amyl"/>
    <property type="match status" value="1"/>
</dbReference>
<dbReference type="PRINTS" id="PR00382">
    <property type="entry name" value="LIPIDTRNSFER"/>
</dbReference>
<dbReference type="SMART" id="SM00499">
    <property type="entry name" value="AAI"/>
    <property type="match status" value="1"/>
</dbReference>
<dbReference type="SUPFAM" id="SSF47699">
    <property type="entry name" value="Bifunctional inhibitor/lipid-transfer protein/seed storage 2S albumin"/>
    <property type="match status" value="1"/>
</dbReference>
<dbReference type="PROSITE" id="PS00597">
    <property type="entry name" value="PLANT_LTP"/>
    <property type="match status" value="1"/>
</dbReference>
<gene>
    <name type="primary">IWF1'</name>
    <name type="synonym">IWFA</name>
</gene>
<accession>Q43748</accession>
<comment type="function">
    <text>Plant non-specific lipid-transfer proteins transfer phospholipids as well as galactolipids across membranes. May play a role in wax or cutin deposition in the cell walls of expanding epidermal cells and certain secretory tissues. Also has fungicide activity.</text>
</comment>
<comment type="similarity">
    <text evidence="2">Belongs to the plant LTP family.</text>
</comment>
<protein>
    <recommendedName>
        <fullName>Non-specific lipid-transfer protein</fullName>
        <shortName>LTP</shortName>
    </recommendedName>
</protein>
<proteinExistence type="inferred from homology"/>
<organism>
    <name type="scientific">Beta vulgaris</name>
    <name type="common">Sugar beet</name>
    <dbReference type="NCBI Taxonomy" id="161934"/>
    <lineage>
        <taxon>Eukaryota</taxon>
        <taxon>Viridiplantae</taxon>
        <taxon>Streptophyta</taxon>
        <taxon>Embryophyta</taxon>
        <taxon>Tracheophyta</taxon>
        <taxon>Spermatophyta</taxon>
        <taxon>Magnoliopsida</taxon>
        <taxon>eudicotyledons</taxon>
        <taxon>Gunneridae</taxon>
        <taxon>Pentapetalae</taxon>
        <taxon>Caryophyllales</taxon>
        <taxon>Chenopodiaceae</taxon>
        <taxon>Betoideae</taxon>
        <taxon>Beta</taxon>
    </lineage>
</organism>
<sequence length="117" mass="11645">MASSAFVKFTCALVMCMMVAAPLAEAITCGLVASKLAPCIGYLQGAPGPSAACCGGIKSLNSAAASPADRKTACTCLKSAATSIKGINYGKAASLPRQCGVSVPYAISPNTNCNAIH</sequence>
<reference key="1">
    <citation type="journal article" date="1996" name="Plant Mol. Biol.">
        <title>New antifungal proteins from sugar beet (Beta vulgaris L.) showing homology to non-specific lipid transfer proteins.</title>
        <authorList>
            <person name="Nielsen K.K."/>
            <person name="Nielsen J.E."/>
            <person name="Madrid S.M."/>
            <person name="Mikkelsen J.D."/>
        </authorList>
    </citation>
    <scope>NUCLEOTIDE SEQUENCE [MRNA]</scope>
    <source>
        <strain>cv. Monova</strain>
        <tissue>Leaf</tissue>
    </source>
</reference>